<dbReference type="EC" id="2.5.1.78" evidence="1"/>
<dbReference type="EMBL" id="CP000552">
    <property type="protein sequence ID" value="ABM73040.1"/>
    <property type="molecule type" value="Genomic_DNA"/>
</dbReference>
<dbReference type="RefSeq" id="WP_011821125.1">
    <property type="nucleotide sequence ID" value="NC_008817.1"/>
</dbReference>
<dbReference type="SMR" id="A2BZ29"/>
<dbReference type="STRING" id="167542.P9515_18331"/>
<dbReference type="GeneID" id="60200719"/>
<dbReference type="KEGG" id="pmc:P9515_18331"/>
<dbReference type="eggNOG" id="COG0054">
    <property type="taxonomic scope" value="Bacteria"/>
</dbReference>
<dbReference type="HOGENOM" id="CLU_089358_1_0_3"/>
<dbReference type="OrthoDB" id="9809709at2"/>
<dbReference type="UniPathway" id="UPA00275">
    <property type="reaction ID" value="UER00404"/>
</dbReference>
<dbReference type="Proteomes" id="UP000001589">
    <property type="component" value="Chromosome"/>
</dbReference>
<dbReference type="GO" id="GO:0005829">
    <property type="term" value="C:cytosol"/>
    <property type="evidence" value="ECO:0007669"/>
    <property type="project" value="TreeGrafter"/>
</dbReference>
<dbReference type="GO" id="GO:0009349">
    <property type="term" value="C:riboflavin synthase complex"/>
    <property type="evidence" value="ECO:0007669"/>
    <property type="project" value="InterPro"/>
</dbReference>
<dbReference type="GO" id="GO:0000906">
    <property type="term" value="F:6,7-dimethyl-8-ribityllumazine synthase activity"/>
    <property type="evidence" value="ECO:0007669"/>
    <property type="project" value="UniProtKB-UniRule"/>
</dbReference>
<dbReference type="GO" id="GO:0009231">
    <property type="term" value="P:riboflavin biosynthetic process"/>
    <property type="evidence" value="ECO:0007669"/>
    <property type="project" value="UniProtKB-UniRule"/>
</dbReference>
<dbReference type="CDD" id="cd09209">
    <property type="entry name" value="Lumazine_synthase-I"/>
    <property type="match status" value="1"/>
</dbReference>
<dbReference type="Gene3D" id="3.40.50.960">
    <property type="entry name" value="Lumazine/riboflavin synthase"/>
    <property type="match status" value="1"/>
</dbReference>
<dbReference type="HAMAP" id="MF_00178">
    <property type="entry name" value="Lumazine_synth"/>
    <property type="match status" value="1"/>
</dbReference>
<dbReference type="InterPro" id="IPR034964">
    <property type="entry name" value="LS"/>
</dbReference>
<dbReference type="InterPro" id="IPR002180">
    <property type="entry name" value="LS/RS"/>
</dbReference>
<dbReference type="InterPro" id="IPR036467">
    <property type="entry name" value="LS/RS_sf"/>
</dbReference>
<dbReference type="NCBIfam" id="TIGR00114">
    <property type="entry name" value="lumazine-synth"/>
    <property type="match status" value="1"/>
</dbReference>
<dbReference type="PANTHER" id="PTHR21058:SF0">
    <property type="entry name" value="6,7-DIMETHYL-8-RIBITYLLUMAZINE SYNTHASE"/>
    <property type="match status" value="1"/>
</dbReference>
<dbReference type="PANTHER" id="PTHR21058">
    <property type="entry name" value="6,7-DIMETHYL-8-RIBITYLLUMAZINE SYNTHASE DMRL SYNTHASE LUMAZINE SYNTHASE"/>
    <property type="match status" value="1"/>
</dbReference>
<dbReference type="Pfam" id="PF00885">
    <property type="entry name" value="DMRL_synthase"/>
    <property type="match status" value="1"/>
</dbReference>
<dbReference type="SUPFAM" id="SSF52121">
    <property type="entry name" value="Lumazine synthase"/>
    <property type="match status" value="1"/>
</dbReference>
<feature type="chain" id="PRO_1000040481" description="6,7-dimethyl-8-ribityllumazine synthase">
    <location>
        <begin position="1"/>
        <end position="158"/>
    </location>
</feature>
<feature type="active site" description="Proton donor" evidence="1">
    <location>
        <position position="93"/>
    </location>
</feature>
<feature type="binding site" evidence="1">
    <location>
        <position position="23"/>
    </location>
    <ligand>
        <name>5-amino-6-(D-ribitylamino)uracil</name>
        <dbReference type="ChEBI" id="CHEBI:15934"/>
    </ligand>
</feature>
<feature type="binding site" evidence="1">
    <location>
        <begin position="61"/>
        <end position="63"/>
    </location>
    <ligand>
        <name>5-amino-6-(D-ribitylamino)uracil</name>
        <dbReference type="ChEBI" id="CHEBI:15934"/>
    </ligand>
</feature>
<feature type="binding site" evidence="1">
    <location>
        <begin position="85"/>
        <end position="87"/>
    </location>
    <ligand>
        <name>5-amino-6-(D-ribitylamino)uracil</name>
        <dbReference type="ChEBI" id="CHEBI:15934"/>
    </ligand>
</feature>
<feature type="binding site" evidence="1">
    <location>
        <begin position="90"/>
        <end position="91"/>
    </location>
    <ligand>
        <name>(2S)-2-hydroxy-3-oxobutyl phosphate</name>
        <dbReference type="ChEBI" id="CHEBI:58830"/>
    </ligand>
</feature>
<feature type="binding site" evidence="1">
    <location>
        <position position="118"/>
    </location>
    <ligand>
        <name>5-amino-6-(D-ribitylamino)uracil</name>
        <dbReference type="ChEBI" id="CHEBI:15934"/>
    </ligand>
</feature>
<feature type="binding site" evidence="1">
    <location>
        <position position="132"/>
    </location>
    <ligand>
        <name>(2S)-2-hydroxy-3-oxobutyl phosphate</name>
        <dbReference type="ChEBI" id="CHEBI:58830"/>
    </ligand>
</feature>
<reference key="1">
    <citation type="journal article" date="2007" name="PLoS Genet.">
        <title>Patterns and implications of gene gain and loss in the evolution of Prochlorococcus.</title>
        <authorList>
            <person name="Kettler G.C."/>
            <person name="Martiny A.C."/>
            <person name="Huang K."/>
            <person name="Zucker J."/>
            <person name="Coleman M.L."/>
            <person name="Rodrigue S."/>
            <person name="Chen F."/>
            <person name="Lapidus A."/>
            <person name="Ferriera S."/>
            <person name="Johnson J."/>
            <person name="Steglich C."/>
            <person name="Church G.M."/>
            <person name="Richardson P."/>
            <person name="Chisholm S.W."/>
        </authorList>
    </citation>
    <scope>NUCLEOTIDE SEQUENCE [LARGE SCALE GENOMIC DNA]</scope>
    <source>
        <strain>MIT 9515</strain>
    </source>
</reference>
<keyword id="KW-0686">Riboflavin biosynthesis</keyword>
<keyword id="KW-0808">Transferase</keyword>
<protein>
    <recommendedName>
        <fullName evidence="1">6,7-dimethyl-8-ribityllumazine synthase</fullName>
        <shortName evidence="1">DMRL synthase</shortName>
        <shortName evidence="1">LS</shortName>
        <shortName evidence="1">Lumazine synthase</shortName>
        <ecNumber evidence="1">2.5.1.78</ecNumber>
    </recommendedName>
</protein>
<organism>
    <name type="scientific">Prochlorococcus marinus (strain MIT 9515)</name>
    <dbReference type="NCBI Taxonomy" id="167542"/>
    <lineage>
        <taxon>Bacteria</taxon>
        <taxon>Bacillati</taxon>
        <taxon>Cyanobacteriota</taxon>
        <taxon>Cyanophyceae</taxon>
        <taxon>Synechococcales</taxon>
        <taxon>Prochlorococcaceae</taxon>
        <taxon>Prochlorococcus</taxon>
    </lineage>
</organism>
<evidence type="ECO:0000255" key="1">
    <source>
        <dbReference type="HAMAP-Rule" id="MF_00178"/>
    </source>
</evidence>
<accession>A2BZ29</accession>
<comment type="function">
    <text evidence="1">Catalyzes the formation of 6,7-dimethyl-8-ribityllumazine by condensation of 5-amino-6-(D-ribitylamino)uracil with 3,4-dihydroxy-2-butanone 4-phosphate. This is the penultimate step in the biosynthesis of riboflavin.</text>
</comment>
<comment type="catalytic activity">
    <reaction evidence="1">
        <text>(2S)-2-hydroxy-3-oxobutyl phosphate + 5-amino-6-(D-ribitylamino)uracil = 6,7-dimethyl-8-(1-D-ribityl)lumazine + phosphate + 2 H2O + H(+)</text>
        <dbReference type="Rhea" id="RHEA:26152"/>
        <dbReference type="ChEBI" id="CHEBI:15377"/>
        <dbReference type="ChEBI" id="CHEBI:15378"/>
        <dbReference type="ChEBI" id="CHEBI:15934"/>
        <dbReference type="ChEBI" id="CHEBI:43474"/>
        <dbReference type="ChEBI" id="CHEBI:58201"/>
        <dbReference type="ChEBI" id="CHEBI:58830"/>
        <dbReference type="EC" id="2.5.1.78"/>
    </reaction>
</comment>
<comment type="pathway">
    <text evidence="1">Cofactor biosynthesis; riboflavin biosynthesis; riboflavin from 2-hydroxy-3-oxobutyl phosphate and 5-amino-6-(D-ribitylamino)uracil: step 1/2.</text>
</comment>
<comment type="similarity">
    <text evidence="1">Belongs to the DMRL synthase family.</text>
</comment>
<sequence>MAIFEGSFTTASNLKVGIVVARFNDLITNKILSGCLDCLKRHGLDTSETSETLDIVWVPGSFELPIAAKTLLKKSNYDVLISLGAVIRGETSHYDVVISEASKGIAQVSYDYDVPIIFGVLTTDSMQQALERAGIKNNLGWNYALQAIEMGSLIKNLN</sequence>
<proteinExistence type="inferred from homology"/>
<gene>
    <name evidence="1" type="primary">ribH</name>
    <name type="ordered locus">P9515_18331</name>
</gene>
<name>RISB_PROM5</name>